<sequence length="509" mass="54889">MDIRAAEISAILKEQIKNFGKEAEVSEVGQVLSVGDGIARVYGLDNVQAGEMVEFPGGIRGMALNLESDNVGVVIFGADRDIKEGDVVKRTGAIVDVPVGPELLGRVVDALGNPIDGKGPIKAKERRRVDVKAPGIIPRKSVHEPMSTGLKAIDALIPVGRGQRELVIGDRQTGKTAIILDTFLNQKPIHDNGPDKDKLYCVYVAVGQKRSTVAQFVKVLEERGALEYSIVVAATASDPAPMQYLAPFAGCAMGEYFRDNGQHALIGYDDLSKQAVAYRQMSLLLRRPPGREAYPGDVFYLHSRLLERAAKLNDENGAGSLTALPVIETQGNDVSAFIPTNVISITDGQIFLETNLFYQGIRPAVNVGLSVSRVGSSAQIKAMKQVAGSIKGELAQYREMAAFAQFGSDLDAATQRLLNRGARLTELLKQPQFSPLKTEEQVAVIYAGVNGYLDKLAVNQVGKFEEGLLASLRTEHKDVLEGICNEKALTDDLKAKLKAAIDAFAKSFA</sequence>
<name>ATPA_BRUME</name>
<feature type="chain" id="PRO_0000238215" description="ATP synthase subunit alpha">
    <location>
        <begin position="1"/>
        <end position="509"/>
    </location>
</feature>
<feature type="binding site" evidence="1">
    <location>
        <begin position="169"/>
        <end position="176"/>
    </location>
    <ligand>
        <name>ATP</name>
        <dbReference type="ChEBI" id="CHEBI:30616"/>
    </ligand>
</feature>
<feature type="site" description="Required for activity" evidence="1">
    <location>
        <position position="370"/>
    </location>
</feature>
<proteinExistence type="inferred from homology"/>
<gene>
    <name evidence="1" type="primary">atpA</name>
    <name type="ordered locus">BMEI0249</name>
</gene>
<protein>
    <recommendedName>
        <fullName evidence="1">ATP synthase subunit alpha</fullName>
        <ecNumber evidence="1">7.1.2.2</ecNumber>
    </recommendedName>
    <alternativeName>
        <fullName evidence="1">ATP synthase F1 sector subunit alpha</fullName>
    </alternativeName>
    <alternativeName>
        <fullName evidence="1">F-ATPase subunit alpha</fullName>
    </alternativeName>
</protein>
<comment type="function">
    <text evidence="1">Produces ATP from ADP in the presence of a proton gradient across the membrane. The alpha chain is a regulatory subunit.</text>
</comment>
<comment type="catalytic activity">
    <reaction evidence="1">
        <text>ATP + H2O + 4 H(+)(in) = ADP + phosphate + 5 H(+)(out)</text>
        <dbReference type="Rhea" id="RHEA:57720"/>
        <dbReference type="ChEBI" id="CHEBI:15377"/>
        <dbReference type="ChEBI" id="CHEBI:15378"/>
        <dbReference type="ChEBI" id="CHEBI:30616"/>
        <dbReference type="ChEBI" id="CHEBI:43474"/>
        <dbReference type="ChEBI" id="CHEBI:456216"/>
        <dbReference type="EC" id="7.1.2.2"/>
    </reaction>
</comment>
<comment type="subunit">
    <text evidence="1">F-type ATPases have 2 components, CF(1) - the catalytic core - and CF(0) - the membrane proton channel. CF(1) has five subunits: alpha(3), beta(3), gamma(1), delta(1), epsilon(1). CF(0) has three main subunits: a(1), b(2) and c(9-12). The alpha and beta chains form an alternating ring which encloses part of the gamma chain. CF(1) is attached to CF(0) by a central stalk formed by the gamma and epsilon chains, while a peripheral stalk is formed by the delta and b chains.</text>
</comment>
<comment type="subcellular location">
    <subcellularLocation>
        <location evidence="1">Cell inner membrane</location>
        <topology evidence="1">Peripheral membrane protein</topology>
    </subcellularLocation>
</comment>
<comment type="similarity">
    <text evidence="1">Belongs to the ATPase alpha/beta chains family.</text>
</comment>
<organism>
    <name type="scientific">Brucella melitensis biotype 1 (strain ATCC 23456 / CCUG 17765 / NCTC 10094 / 16M)</name>
    <dbReference type="NCBI Taxonomy" id="224914"/>
    <lineage>
        <taxon>Bacteria</taxon>
        <taxon>Pseudomonadati</taxon>
        <taxon>Pseudomonadota</taxon>
        <taxon>Alphaproteobacteria</taxon>
        <taxon>Hyphomicrobiales</taxon>
        <taxon>Brucellaceae</taxon>
        <taxon>Brucella/Ochrobactrum group</taxon>
        <taxon>Brucella</taxon>
    </lineage>
</organism>
<dbReference type="EC" id="7.1.2.2" evidence="1"/>
<dbReference type="EMBL" id="AE008917">
    <property type="protein sequence ID" value="AAL51431.1"/>
    <property type="molecule type" value="Genomic_DNA"/>
</dbReference>
<dbReference type="PIR" id="AD3283">
    <property type="entry name" value="AD3283"/>
</dbReference>
<dbReference type="RefSeq" id="WP_004684264.1">
    <property type="nucleotide sequence ID" value="NZ_GG703781.1"/>
</dbReference>
<dbReference type="SMR" id="Q8YJ37"/>
<dbReference type="GeneID" id="29593004"/>
<dbReference type="KEGG" id="bme:BMEI0249"/>
<dbReference type="KEGG" id="bmel:DK63_1183"/>
<dbReference type="PATRIC" id="fig|224914.52.peg.1250"/>
<dbReference type="eggNOG" id="COG0056">
    <property type="taxonomic scope" value="Bacteria"/>
</dbReference>
<dbReference type="PhylomeDB" id="Q8YJ37"/>
<dbReference type="Proteomes" id="UP000000419">
    <property type="component" value="Chromosome I"/>
</dbReference>
<dbReference type="GO" id="GO:0005886">
    <property type="term" value="C:plasma membrane"/>
    <property type="evidence" value="ECO:0007669"/>
    <property type="project" value="UniProtKB-SubCell"/>
</dbReference>
<dbReference type="GO" id="GO:0045259">
    <property type="term" value="C:proton-transporting ATP synthase complex"/>
    <property type="evidence" value="ECO:0007669"/>
    <property type="project" value="UniProtKB-KW"/>
</dbReference>
<dbReference type="GO" id="GO:0043531">
    <property type="term" value="F:ADP binding"/>
    <property type="evidence" value="ECO:0007669"/>
    <property type="project" value="TreeGrafter"/>
</dbReference>
<dbReference type="GO" id="GO:0005524">
    <property type="term" value="F:ATP binding"/>
    <property type="evidence" value="ECO:0007669"/>
    <property type="project" value="UniProtKB-UniRule"/>
</dbReference>
<dbReference type="GO" id="GO:0046933">
    <property type="term" value="F:proton-transporting ATP synthase activity, rotational mechanism"/>
    <property type="evidence" value="ECO:0007669"/>
    <property type="project" value="UniProtKB-UniRule"/>
</dbReference>
<dbReference type="CDD" id="cd18113">
    <property type="entry name" value="ATP-synt_F1_alpha_C"/>
    <property type="match status" value="1"/>
</dbReference>
<dbReference type="CDD" id="cd18116">
    <property type="entry name" value="ATP-synt_F1_alpha_N"/>
    <property type="match status" value="1"/>
</dbReference>
<dbReference type="CDD" id="cd01132">
    <property type="entry name" value="F1-ATPase_alpha_CD"/>
    <property type="match status" value="1"/>
</dbReference>
<dbReference type="FunFam" id="1.20.150.20:FF:000001">
    <property type="entry name" value="ATP synthase subunit alpha"/>
    <property type="match status" value="1"/>
</dbReference>
<dbReference type="FunFam" id="2.40.30.20:FF:000001">
    <property type="entry name" value="ATP synthase subunit alpha"/>
    <property type="match status" value="1"/>
</dbReference>
<dbReference type="FunFam" id="3.40.50.300:FF:002432">
    <property type="entry name" value="ATP synthase subunit alpha, mitochondrial"/>
    <property type="match status" value="1"/>
</dbReference>
<dbReference type="Gene3D" id="2.40.30.20">
    <property type="match status" value="1"/>
</dbReference>
<dbReference type="Gene3D" id="1.20.150.20">
    <property type="entry name" value="ATP synthase alpha/beta chain, C-terminal domain"/>
    <property type="match status" value="1"/>
</dbReference>
<dbReference type="Gene3D" id="3.40.50.300">
    <property type="entry name" value="P-loop containing nucleotide triphosphate hydrolases"/>
    <property type="match status" value="1"/>
</dbReference>
<dbReference type="HAMAP" id="MF_01346">
    <property type="entry name" value="ATP_synth_alpha_bact"/>
    <property type="match status" value="1"/>
</dbReference>
<dbReference type="InterPro" id="IPR023366">
    <property type="entry name" value="ATP_synth_asu-like_sf"/>
</dbReference>
<dbReference type="InterPro" id="IPR000793">
    <property type="entry name" value="ATP_synth_asu_C"/>
</dbReference>
<dbReference type="InterPro" id="IPR038376">
    <property type="entry name" value="ATP_synth_asu_C_sf"/>
</dbReference>
<dbReference type="InterPro" id="IPR033732">
    <property type="entry name" value="ATP_synth_F1_a_nt-bd_dom"/>
</dbReference>
<dbReference type="InterPro" id="IPR005294">
    <property type="entry name" value="ATP_synth_F1_asu"/>
</dbReference>
<dbReference type="InterPro" id="IPR020003">
    <property type="entry name" value="ATPase_a/bsu_AS"/>
</dbReference>
<dbReference type="InterPro" id="IPR004100">
    <property type="entry name" value="ATPase_F1/V1/A1_a/bsu_N"/>
</dbReference>
<dbReference type="InterPro" id="IPR036121">
    <property type="entry name" value="ATPase_F1/V1/A1_a/bsu_N_sf"/>
</dbReference>
<dbReference type="InterPro" id="IPR000194">
    <property type="entry name" value="ATPase_F1/V1/A1_a/bsu_nucl-bd"/>
</dbReference>
<dbReference type="InterPro" id="IPR027417">
    <property type="entry name" value="P-loop_NTPase"/>
</dbReference>
<dbReference type="NCBIfam" id="TIGR00962">
    <property type="entry name" value="atpA"/>
    <property type="match status" value="1"/>
</dbReference>
<dbReference type="NCBIfam" id="NF009884">
    <property type="entry name" value="PRK13343.1"/>
    <property type="match status" value="1"/>
</dbReference>
<dbReference type="PANTHER" id="PTHR48082">
    <property type="entry name" value="ATP SYNTHASE SUBUNIT ALPHA, MITOCHONDRIAL"/>
    <property type="match status" value="1"/>
</dbReference>
<dbReference type="PANTHER" id="PTHR48082:SF2">
    <property type="entry name" value="ATP SYNTHASE SUBUNIT ALPHA, MITOCHONDRIAL"/>
    <property type="match status" value="1"/>
</dbReference>
<dbReference type="Pfam" id="PF00006">
    <property type="entry name" value="ATP-synt_ab"/>
    <property type="match status" value="1"/>
</dbReference>
<dbReference type="Pfam" id="PF00306">
    <property type="entry name" value="ATP-synt_ab_C"/>
    <property type="match status" value="1"/>
</dbReference>
<dbReference type="Pfam" id="PF02874">
    <property type="entry name" value="ATP-synt_ab_N"/>
    <property type="match status" value="1"/>
</dbReference>
<dbReference type="PIRSF" id="PIRSF039088">
    <property type="entry name" value="F_ATPase_subunit_alpha"/>
    <property type="match status" value="1"/>
</dbReference>
<dbReference type="SUPFAM" id="SSF47917">
    <property type="entry name" value="C-terminal domain of alpha and beta subunits of F1 ATP synthase"/>
    <property type="match status" value="1"/>
</dbReference>
<dbReference type="SUPFAM" id="SSF50615">
    <property type="entry name" value="N-terminal domain of alpha and beta subunits of F1 ATP synthase"/>
    <property type="match status" value="1"/>
</dbReference>
<dbReference type="SUPFAM" id="SSF52540">
    <property type="entry name" value="P-loop containing nucleoside triphosphate hydrolases"/>
    <property type="match status" value="1"/>
</dbReference>
<dbReference type="PROSITE" id="PS00152">
    <property type="entry name" value="ATPASE_ALPHA_BETA"/>
    <property type="match status" value="1"/>
</dbReference>
<accession>Q8YJ37</accession>
<evidence type="ECO:0000255" key="1">
    <source>
        <dbReference type="HAMAP-Rule" id="MF_01346"/>
    </source>
</evidence>
<keyword id="KW-0066">ATP synthesis</keyword>
<keyword id="KW-0067">ATP-binding</keyword>
<keyword id="KW-0997">Cell inner membrane</keyword>
<keyword id="KW-1003">Cell membrane</keyword>
<keyword id="KW-0139">CF(1)</keyword>
<keyword id="KW-0375">Hydrogen ion transport</keyword>
<keyword id="KW-0406">Ion transport</keyword>
<keyword id="KW-0472">Membrane</keyword>
<keyword id="KW-0547">Nucleotide-binding</keyword>
<keyword id="KW-1278">Translocase</keyword>
<keyword id="KW-0813">Transport</keyword>
<reference key="1">
    <citation type="journal article" date="2002" name="Proc. Natl. Acad. Sci. U.S.A.">
        <title>The genome sequence of the facultative intracellular pathogen Brucella melitensis.</title>
        <authorList>
            <person name="DelVecchio V.G."/>
            <person name="Kapatral V."/>
            <person name="Redkar R.J."/>
            <person name="Patra G."/>
            <person name="Mujer C."/>
            <person name="Los T."/>
            <person name="Ivanova N."/>
            <person name="Anderson I."/>
            <person name="Bhattacharyya A."/>
            <person name="Lykidis A."/>
            <person name="Reznik G."/>
            <person name="Jablonski L."/>
            <person name="Larsen N."/>
            <person name="D'Souza M."/>
            <person name="Bernal A."/>
            <person name="Mazur M."/>
            <person name="Goltsman E."/>
            <person name="Selkov E."/>
            <person name="Elzer P.H."/>
            <person name="Hagius S."/>
            <person name="O'Callaghan D."/>
            <person name="Letesson J.-J."/>
            <person name="Haselkorn R."/>
            <person name="Kyrpides N.C."/>
            <person name="Overbeek R."/>
        </authorList>
    </citation>
    <scope>NUCLEOTIDE SEQUENCE [LARGE SCALE GENOMIC DNA]</scope>
    <source>
        <strain>ATCC 23456 / CCUG 17765 / NCTC 10094 / 16M</strain>
    </source>
</reference>